<accession>P11540</accession>
<sequence>MKKAVINGEQIRSISDLHQTLKKELALPEYYGENLDALWDCLTGWVEYPLVLEWRQFEQSKQLTENGAESVLQVFREAKAEGCDITIILS</sequence>
<reference key="1">
    <citation type="journal article" date="1988" name="J. Mol. Biol.">
        <title>Barnase and barstar. Expression of its cloned inhibitor permits expression of a cloned ribonuclease.</title>
        <authorList>
            <person name="Hartley R.W."/>
        </authorList>
    </citation>
    <scope>NUCLEOTIDE SEQUENCE [GENOMIC DNA]</scope>
</reference>
<reference key="2">
    <citation type="journal article" date="1989" name="Trends Biochem. Sci.">
        <title>Barnase and barstar: two small proteins to fold and fit together.</title>
        <authorList>
            <person name="Hartley R.W."/>
        </authorList>
    </citation>
    <scope>REVIEW</scope>
</reference>
<reference key="3">
    <citation type="journal article" date="1993" name="Structure">
        <title>Recognition between a bacterial ribonuclease, barnase, and its natural inhibitor, barstar.</title>
        <authorList>
            <person name="Guillet V."/>
            <person name="Lapthorn A."/>
            <person name="Hartley R.W."/>
            <person name="Mauguen Y."/>
        </authorList>
    </citation>
    <scope>X-RAY CRYSTALLOGRAPHY (2.6 ANGSTROMS) OF COMPLEX WITH BARNASE</scope>
</reference>
<reference key="4">
    <citation type="journal article" date="1998" name="Acta Crystallogr. D">
        <title>Recognition of RNase Sa by the inhibitor barstar: structure of the complex at 1.7 A resolution.</title>
        <authorList>
            <person name="Sevcik J."/>
            <person name="Urbanikova L."/>
            <person name="Dauter Z."/>
            <person name="Wilson K.S."/>
        </authorList>
    </citation>
    <scope>X-RAY CRYSTALLOGRAPHY (1.7 ANGSTROMS) OF COMPLEX WITH RNASE SA</scope>
</reference>
<reference key="5">
    <citation type="journal article" date="1993" name="FEBS Lett.">
        <title>Assignment of the backbone 1H and 15N NMR resonances and secondary structure characterization of barstar.</title>
        <authorList>
            <person name="Lubienski M.J."/>
            <person name="Bycroft M."/>
            <person name="Jones D.N.M."/>
            <person name="Fersht A.R."/>
        </authorList>
    </citation>
    <scope>STRUCTURE BY NMR</scope>
</reference>
<reference key="6">
    <citation type="journal article" date="1994" name="Biochemistry">
        <title>Three-dimensional solution structure and 13C assignments of barstar using nuclear magnetic resonance spectroscopy.</title>
        <authorList>
            <person name="Lubienski M.J."/>
            <person name="Bycroft M."/>
            <person name="Freund S.M.V."/>
            <person name="Fersht A.R."/>
        </authorList>
    </citation>
    <scope>STRUCTURE BY NMR</scope>
</reference>
<dbReference type="EMBL" id="X15545">
    <property type="protein sequence ID" value="CAA33551.1"/>
    <property type="molecule type" value="Genomic_DNA"/>
</dbReference>
<dbReference type="PIR" id="S01373">
    <property type="entry name" value="S01373"/>
</dbReference>
<dbReference type="RefSeq" id="WP_013351425.1">
    <property type="nucleotide sequence ID" value="NZ_VRTX01000005.1"/>
</dbReference>
<dbReference type="PDB" id="1A19">
    <property type="method" value="X-ray"/>
    <property type="resolution" value="2.76 A"/>
    <property type="chains" value="A/B=1-90"/>
</dbReference>
<dbReference type="PDB" id="1AB7">
    <property type="method" value="NMR"/>
    <property type="chains" value="A=2-90"/>
</dbReference>
<dbReference type="PDB" id="1AY7">
    <property type="method" value="X-ray"/>
    <property type="resolution" value="1.70 A"/>
    <property type="chains" value="B=2-90"/>
</dbReference>
<dbReference type="PDB" id="1B27">
    <property type="method" value="X-ray"/>
    <property type="resolution" value="2.10 A"/>
    <property type="chains" value="D/E/F=1-90"/>
</dbReference>
<dbReference type="PDB" id="1B2S">
    <property type="method" value="X-ray"/>
    <property type="resolution" value="1.82 A"/>
    <property type="chains" value="D/E/F=1-90"/>
</dbReference>
<dbReference type="PDB" id="1B2U">
    <property type="method" value="X-ray"/>
    <property type="resolution" value="2.10 A"/>
    <property type="chains" value="D/E/F=1-90"/>
</dbReference>
<dbReference type="PDB" id="1B3S">
    <property type="method" value="X-ray"/>
    <property type="resolution" value="2.39 A"/>
    <property type="chains" value="D/E/F=1-90"/>
</dbReference>
<dbReference type="PDB" id="1BGS">
    <property type="method" value="X-ray"/>
    <property type="resolution" value="2.60 A"/>
    <property type="chains" value="E/F/G=2-90"/>
</dbReference>
<dbReference type="PDB" id="1BRS">
    <property type="method" value="X-ray"/>
    <property type="resolution" value="2.00 A"/>
    <property type="chains" value="D/E/F=2-90"/>
</dbReference>
<dbReference type="PDB" id="1BTA">
    <property type="method" value="NMR"/>
    <property type="chains" value="A=2-90"/>
</dbReference>
<dbReference type="PDB" id="1BTB">
    <property type="method" value="NMR"/>
    <property type="chains" value="A=2-90"/>
</dbReference>
<dbReference type="PDB" id="1L1K">
    <property type="method" value="NMR"/>
    <property type="chains" value="A=2-21"/>
</dbReference>
<dbReference type="PDB" id="1X1U">
    <property type="method" value="X-ray"/>
    <property type="resolution" value="2.30 A"/>
    <property type="chains" value="D/E/F=2-90"/>
</dbReference>
<dbReference type="PDB" id="1X1W">
    <property type="method" value="X-ray"/>
    <property type="resolution" value="2.10 A"/>
    <property type="chains" value="D/E/F=1-90"/>
</dbReference>
<dbReference type="PDB" id="1X1X">
    <property type="method" value="X-ray"/>
    <property type="resolution" value="2.30 A"/>
    <property type="chains" value="D/E/F=2-90"/>
</dbReference>
<dbReference type="PDB" id="1X1Y">
    <property type="method" value="X-ray"/>
    <property type="resolution" value="1.90 A"/>
    <property type="chains" value="D/E/F=1-90"/>
</dbReference>
<dbReference type="PDB" id="2HXX">
    <property type="method" value="X-ray"/>
    <property type="resolution" value="2.00 A"/>
    <property type="chains" value="A/B=2-90"/>
</dbReference>
<dbReference type="PDB" id="2ZA4">
    <property type="method" value="X-ray"/>
    <property type="resolution" value="1.58 A"/>
    <property type="chains" value="B/D=1-90"/>
</dbReference>
<dbReference type="PDB" id="3DA7">
    <property type="method" value="X-ray"/>
    <property type="resolution" value="2.25 A"/>
    <property type="chains" value="C/D/F/H=1-90"/>
</dbReference>
<dbReference type="PDB" id="6PQK">
    <property type="method" value="X-ray"/>
    <property type="resolution" value="1.20 A"/>
    <property type="chains" value="B/D=1-90"/>
</dbReference>
<dbReference type="PDB" id="7MRX">
    <property type="method" value="X-ray"/>
    <property type="resolution" value="2.29 A"/>
    <property type="chains" value="B/D/F=1-90"/>
</dbReference>
<dbReference type="PDBsum" id="1A19"/>
<dbReference type="PDBsum" id="1AB7"/>
<dbReference type="PDBsum" id="1AY7"/>
<dbReference type="PDBsum" id="1B27"/>
<dbReference type="PDBsum" id="1B2S"/>
<dbReference type="PDBsum" id="1B2U"/>
<dbReference type="PDBsum" id="1B3S"/>
<dbReference type="PDBsum" id="1BGS"/>
<dbReference type="PDBsum" id="1BRS"/>
<dbReference type="PDBsum" id="1BTA"/>
<dbReference type="PDBsum" id="1BTB"/>
<dbReference type="PDBsum" id="1L1K"/>
<dbReference type="PDBsum" id="1X1U"/>
<dbReference type="PDBsum" id="1X1W"/>
<dbReference type="PDBsum" id="1X1X"/>
<dbReference type="PDBsum" id="1X1Y"/>
<dbReference type="PDBsum" id="2HXX"/>
<dbReference type="PDBsum" id="2ZA4"/>
<dbReference type="PDBsum" id="3DA7"/>
<dbReference type="PDBsum" id="6PQK"/>
<dbReference type="PDBsum" id="7MRX"/>
<dbReference type="BMRB" id="P11540"/>
<dbReference type="SMR" id="P11540"/>
<dbReference type="DIP" id="DIP-621N"/>
<dbReference type="IntAct" id="P11540">
    <property type="interactions" value="2"/>
</dbReference>
<dbReference type="STRING" id="692420.BAMF_0800"/>
<dbReference type="eggNOG" id="COG2732">
    <property type="taxonomic scope" value="Bacteria"/>
</dbReference>
<dbReference type="OMA" id="LEWRQFE"/>
<dbReference type="OrthoDB" id="7575400at2"/>
<dbReference type="EvolutionaryTrace" id="P11540"/>
<dbReference type="GO" id="GO:0005737">
    <property type="term" value="C:cytoplasm"/>
    <property type="evidence" value="ECO:0007669"/>
    <property type="project" value="UniProtKB-SubCell"/>
</dbReference>
<dbReference type="CDD" id="cd05142">
    <property type="entry name" value="Barstar"/>
    <property type="match status" value="1"/>
</dbReference>
<dbReference type="Gene3D" id="3.30.370.10">
    <property type="entry name" value="Barstar-like"/>
    <property type="match status" value="1"/>
</dbReference>
<dbReference type="InterPro" id="IPR000468">
    <property type="entry name" value="Barstar"/>
</dbReference>
<dbReference type="InterPro" id="IPR035905">
    <property type="entry name" value="Barstar-like_sf"/>
</dbReference>
<dbReference type="Pfam" id="PF01337">
    <property type="entry name" value="Barstar"/>
    <property type="match status" value="1"/>
</dbReference>
<dbReference type="SUPFAM" id="SSF52038">
    <property type="entry name" value="Barstar-related"/>
    <property type="match status" value="1"/>
</dbReference>
<comment type="function">
    <text>Inhibitor of the ribonuclease barnase. Forms a one-to-one non-covalent complex.</text>
</comment>
<comment type="subcellular location">
    <subcellularLocation>
        <location>Cytoplasm</location>
    </subcellularLocation>
</comment>
<comment type="similarity">
    <text evidence="1">Belongs to the barstar family.</text>
</comment>
<name>BARS_BACAM</name>
<evidence type="ECO:0000305" key="1"/>
<evidence type="ECO:0007829" key="2">
    <source>
        <dbReference type="PDB" id="6PQK"/>
    </source>
</evidence>
<organism>
    <name type="scientific">Bacillus amyloliquefaciens</name>
    <name type="common">Bacillus velezensis</name>
    <dbReference type="NCBI Taxonomy" id="1390"/>
    <lineage>
        <taxon>Bacteria</taxon>
        <taxon>Bacillati</taxon>
        <taxon>Bacillota</taxon>
        <taxon>Bacilli</taxon>
        <taxon>Bacillales</taxon>
        <taxon>Bacillaceae</taxon>
        <taxon>Bacillus</taxon>
        <taxon>Bacillus amyloliquefaciens group</taxon>
    </lineage>
</organism>
<proteinExistence type="evidence at protein level"/>
<feature type="initiator methionine" description="Removed">
    <location>
        <position position="1"/>
    </location>
</feature>
<feature type="chain" id="PRO_0000064827" description="Barstar">
    <location>
        <begin position="2"/>
        <end position="90"/>
    </location>
</feature>
<feature type="strand" evidence="2">
    <location>
        <begin position="2"/>
        <end position="7"/>
    </location>
</feature>
<feature type="helix" evidence="2">
    <location>
        <begin position="8"/>
        <end position="10"/>
    </location>
</feature>
<feature type="helix" evidence="2">
    <location>
        <begin position="14"/>
        <end position="24"/>
    </location>
</feature>
<feature type="helix" evidence="2">
    <location>
        <begin position="35"/>
        <end position="44"/>
    </location>
</feature>
<feature type="strand" evidence="2">
    <location>
        <begin position="48"/>
        <end position="55"/>
    </location>
</feature>
<feature type="helix" evidence="2">
    <location>
        <begin position="57"/>
        <end position="61"/>
    </location>
</feature>
<feature type="strand" evidence="2">
    <location>
        <begin position="63"/>
        <end position="65"/>
    </location>
</feature>
<feature type="helix" evidence="2">
    <location>
        <begin position="68"/>
        <end position="80"/>
    </location>
</feature>
<feature type="strand" evidence="2">
    <location>
        <begin position="85"/>
        <end position="90"/>
    </location>
</feature>
<protein>
    <recommendedName>
        <fullName>Barstar</fullName>
    </recommendedName>
    <alternativeName>
        <fullName>Ribonuclease inhibitor</fullName>
    </alternativeName>
</protein>
<keyword id="KW-0002">3D-structure</keyword>
<keyword id="KW-0963">Cytoplasm</keyword>